<reference key="1">
    <citation type="journal article" date="1989" name="Nature">
        <title>An African primate lentivirus (SIVsm) closely related to HIV-2.</title>
        <authorList>
            <person name="Hirsch V.M."/>
            <person name="Olmstead R.A."/>
            <person name="Murphey-Corb M."/>
            <person name="Purcell R.H."/>
            <person name="Johnson P.R."/>
        </authorList>
    </citation>
    <scope>NUCLEOTIDE SEQUENCE [GENOMIC DNA]</scope>
</reference>
<gene>
    <name type="primary">vif</name>
</gene>
<feature type="chain" id="PRO_0000085333" description="Virion infectivity factor">
    <location>
        <begin position="1"/>
        <end position="214"/>
    </location>
</feature>
<feature type="region of interest" description="Multimerization" evidence="1">
    <location>
        <begin position="154"/>
        <end position="166"/>
    </location>
</feature>
<feature type="region of interest" description="Disordered" evidence="2">
    <location>
        <begin position="166"/>
        <end position="201"/>
    </location>
</feature>
<feature type="short sequence motif" description="HCCH motif" evidence="1">
    <location>
        <begin position="110"/>
        <end position="141"/>
    </location>
</feature>
<feature type="short sequence motif" description="BC-box-like motif" evidence="1">
    <location>
        <begin position="147"/>
        <end position="156"/>
    </location>
</feature>
<feature type="compositionally biased region" description="Basic residues" evidence="2">
    <location>
        <begin position="170"/>
        <end position="190"/>
    </location>
</feature>
<feature type="modified residue" description="Phosphothreonine; by host" evidence="1">
    <location>
        <position position="98"/>
    </location>
</feature>
<feature type="modified residue" description="Phosphoserine; by host" evidence="1">
    <location>
        <position position="147"/>
    </location>
</feature>
<sequence>MEEEKNWIVVPTWRIPERLERWHSLIKHLKYNTKDLQMACYVPHHKVGWAWWTCSRVIFPLRDETHLEVQGYWNLAPEKGWLSTYAVRITWYSRNFWTDVTPDYADTLLHSTYFPCFSEGEVRKAIRGEKLLSCCKFPKAHKNQVPSLQYLALTVVSHVRSQGEDPTWKQWRRNNRKGLRMAKQNSRRNKQGSSKSPAEGANFPGLAKVLGILA</sequence>
<comment type="function">
    <text evidence="1">Counteracts the innate antiviral activity of APOBEC3G. Forms a complex with host APOBEC3G thus preventing the entry of this lethally hypermutating enzyme into progeny virions. Functions as an adapter molecule, recruiting APOBEC3G to the ubiquitin-proteasome machinery. Targets APOBEC3G for degradation through the assembly with elongin BC complex, CUL5 and RBX1. Binds viral RNA and affects the stability of viral nucleoprotein core. May play a role in viral morphology (By similarity).</text>
</comment>
<comment type="subunit">
    <text evidence="1">Homomultimer; in vitro and presumably in vivo. Interacts with viral Pr55Gag precursor and host APOBEC3G. The interaction between Vif and APOBEC3G is species-specific, which may play a role in restricting the replication of SIV to their host. Forms an E3 ligase complex by interacting with host CUL5 and elongin BC complex (ELOB and ELOC) (By similarity).</text>
</comment>
<comment type="subcellular location">
    <subcellularLocation>
        <location evidence="1">Host cytoplasm</location>
    </subcellularLocation>
    <subcellularLocation>
        <location evidence="1">Host cell membrane</location>
        <topology evidence="1">Peripheral membrane protein</topology>
        <orientation evidence="1">Cytoplasmic side</orientation>
    </subcellularLocation>
    <subcellularLocation>
        <location evidence="1">Virion</location>
    </subcellularLocation>
    <text evidence="1">Seems to colocalize with intermediate filament vimentin. A fraction is associated with the cytoplasmic side of cellular membranes, presumably via the interaction with Pr55Gag precursor (By similarity).</text>
</comment>
<comment type="induction">
    <text>Expressed late during infection in a Rev-dependent manner.</text>
</comment>
<comment type="domain">
    <text evidence="1">The BC-like-box motif mediates the interaction with elongin BC complex.</text>
</comment>
<comment type="domain">
    <text evidence="1">The HCCH motif (H-x(5)-C-x(18)-C-x(5)-H) mediates the interaction with CUL5.</text>
</comment>
<comment type="PTM">
    <text evidence="1">Processed in virion by the viral protease.</text>
</comment>
<comment type="PTM">
    <text evidence="1">Highly phosphorylated on serine and threonine residues.</text>
</comment>
<comment type="PTM">
    <text evidence="1">Polyubiquitinated and degraded by the proteasome in the presence of APOBEC3G.</text>
</comment>
<comment type="miscellaneous">
    <text>Vif-defective viruses show catastrophic failure in reverse transcription due to APOBEC-induced mutations that initiate a DNA base repair pathway and compromise the structural integrity of the ssDNA. In the absence of Vif, the virion is morphologically abnormal.</text>
</comment>
<comment type="similarity">
    <text evidence="3">Belongs to the primate lentivirus group Vif protein family.</text>
</comment>
<protein>
    <recommendedName>
        <fullName>Virion infectivity factor</fullName>
        <shortName>Vif</shortName>
    </recommendedName>
    <alternativeName>
        <fullName>Q protein</fullName>
    </alternativeName>
    <alternativeName>
        <fullName>SOR protein</fullName>
    </alternativeName>
</protein>
<accession>P12505</accession>
<evidence type="ECO:0000250" key="1"/>
<evidence type="ECO:0000256" key="2">
    <source>
        <dbReference type="SAM" id="MobiDB-lite"/>
    </source>
</evidence>
<evidence type="ECO:0000305" key="3"/>
<name>VIF_SIVS4</name>
<organism>
    <name type="scientific">Simian immunodeficiency virus (isolate F236/smH4)</name>
    <name type="common">SIV-sm</name>
    <name type="synonym">Simian immunodeficiency virus sooty mangabey monkey</name>
    <dbReference type="NCBI Taxonomy" id="11737"/>
    <lineage>
        <taxon>Viruses</taxon>
        <taxon>Riboviria</taxon>
        <taxon>Pararnavirae</taxon>
        <taxon>Artverviricota</taxon>
        <taxon>Revtraviricetes</taxon>
        <taxon>Ortervirales</taxon>
        <taxon>Retroviridae</taxon>
        <taxon>Orthoretrovirinae</taxon>
        <taxon>Lentivirus</taxon>
        <taxon>Simian immunodeficiency virus</taxon>
    </lineage>
</organism>
<proteinExistence type="evidence at transcript level"/>
<organismHost>
    <name type="scientific">Cercopithecidae</name>
    <name type="common">Old World monkeys</name>
    <dbReference type="NCBI Taxonomy" id="9527"/>
</organismHost>
<dbReference type="EMBL" id="X14307">
    <property type="protein sequence ID" value="CAA32484.1"/>
    <property type="molecule type" value="Genomic_DNA"/>
</dbReference>
<dbReference type="PIR" id="S07989">
    <property type="entry name" value="S07989"/>
</dbReference>
<dbReference type="SMR" id="P12505"/>
<dbReference type="Proteomes" id="UP000008173">
    <property type="component" value="Segment"/>
</dbReference>
<dbReference type="GO" id="GO:0030430">
    <property type="term" value="C:host cell cytoplasm"/>
    <property type="evidence" value="ECO:0007669"/>
    <property type="project" value="UniProtKB-SubCell"/>
</dbReference>
<dbReference type="GO" id="GO:0020002">
    <property type="term" value="C:host cell plasma membrane"/>
    <property type="evidence" value="ECO:0007669"/>
    <property type="project" value="UniProtKB-SubCell"/>
</dbReference>
<dbReference type="GO" id="GO:0016020">
    <property type="term" value="C:membrane"/>
    <property type="evidence" value="ECO:0007669"/>
    <property type="project" value="UniProtKB-KW"/>
</dbReference>
<dbReference type="GO" id="GO:0044423">
    <property type="term" value="C:virion component"/>
    <property type="evidence" value="ECO:0007669"/>
    <property type="project" value="UniProtKB-KW"/>
</dbReference>
<dbReference type="GO" id="GO:0019058">
    <property type="term" value="P:viral life cycle"/>
    <property type="evidence" value="ECO:0007669"/>
    <property type="project" value="InterPro"/>
</dbReference>
<dbReference type="InterPro" id="IPR000475">
    <property type="entry name" value="Vif"/>
</dbReference>
<dbReference type="Pfam" id="PF00559">
    <property type="entry name" value="Vif"/>
    <property type="match status" value="1"/>
</dbReference>
<dbReference type="PRINTS" id="PR00349">
    <property type="entry name" value="VIRIONINFFCT"/>
</dbReference>
<keyword id="KW-1032">Host cell membrane</keyword>
<keyword id="KW-1035">Host cytoplasm</keyword>
<keyword id="KW-1043">Host membrane</keyword>
<keyword id="KW-0945">Host-virus interaction</keyword>
<keyword id="KW-0472">Membrane</keyword>
<keyword id="KW-0597">Phosphoprotein</keyword>
<keyword id="KW-0832">Ubl conjugation</keyword>
<keyword id="KW-0833">Ubl conjugation pathway</keyword>
<keyword id="KW-0946">Virion</keyword>